<name>HBB_AOTAZ</name>
<reference key="1">
    <citation type="submission" date="2003-04" db="EMBL/GenBank/DDBJ databases">
        <title>The molecular evolution of the primate beta globin gene: an evaluation of gene conversion and phylogeny and an analysis of phylogenetic footprints in noncoding DNA.</title>
        <authorList>
            <person name="Prychitko T.M."/>
            <person name="Goodman M."/>
            <person name="Johnson R.M."/>
        </authorList>
    </citation>
    <scope>NUCLEOTIDE SEQUENCE [GENOMIC DNA]</scope>
</reference>
<sequence>MVHLTGEEKAAVTALWGKVNVDEVGGEALGRLLVVYPWTQRFFDSFGDLSSPDAVMNNPKVKAHGKKVLGAFSDGLAHLDNLKGTFAQLSELHCDKLHVXPENFRLLGNVLVCVLAHHFGKEFTPQVQAAYQKVVAGVANALAHKYH</sequence>
<dbReference type="EMBL" id="AY279113">
    <property type="protein sequence ID" value="AAQ18221.1"/>
    <property type="molecule type" value="Genomic_DNA"/>
</dbReference>
<dbReference type="GO" id="GO:0072562">
    <property type="term" value="C:blood microparticle"/>
    <property type="evidence" value="ECO:0007669"/>
    <property type="project" value="TreeGrafter"/>
</dbReference>
<dbReference type="GO" id="GO:0031838">
    <property type="term" value="C:haptoglobin-hemoglobin complex"/>
    <property type="evidence" value="ECO:0007669"/>
    <property type="project" value="TreeGrafter"/>
</dbReference>
<dbReference type="GO" id="GO:0005833">
    <property type="term" value="C:hemoglobin complex"/>
    <property type="evidence" value="ECO:0007669"/>
    <property type="project" value="InterPro"/>
</dbReference>
<dbReference type="GO" id="GO:0031720">
    <property type="term" value="F:haptoglobin binding"/>
    <property type="evidence" value="ECO:0007669"/>
    <property type="project" value="TreeGrafter"/>
</dbReference>
<dbReference type="GO" id="GO:0020037">
    <property type="term" value="F:heme binding"/>
    <property type="evidence" value="ECO:0007669"/>
    <property type="project" value="InterPro"/>
</dbReference>
<dbReference type="GO" id="GO:0031721">
    <property type="term" value="F:hemoglobin alpha binding"/>
    <property type="evidence" value="ECO:0007669"/>
    <property type="project" value="TreeGrafter"/>
</dbReference>
<dbReference type="GO" id="GO:0046872">
    <property type="term" value="F:metal ion binding"/>
    <property type="evidence" value="ECO:0007669"/>
    <property type="project" value="UniProtKB-KW"/>
</dbReference>
<dbReference type="GO" id="GO:0043177">
    <property type="term" value="F:organic acid binding"/>
    <property type="evidence" value="ECO:0007669"/>
    <property type="project" value="TreeGrafter"/>
</dbReference>
<dbReference type="GO" id="GO:0019825">
    <property type="term" value="F:oxygen binding"/>
    <property type="evidence" value="ECO:0007669"/>
    <property type="project" value="InterPro"/>
</dbReference>
<dbReference type="GO" id="GO:0005344">
    <property type="term" value="F:oxygen carrier activity"/>
    <property type="evidence" value="ECO:0007669"/>
    <property type="project" value="UniProtKB-KW"/>
</dbReference>
<dbReference type="GO" id="GO:0004601">
    <property type="term" value="F:peroxidase activity"/>
    <property type="evidence" value="ECO:0007669"/>
    <property type="project" value="TreeGrafter"/>
</dbReference>
<dbReference type="GO" id="GO:0042744">
    <property type="term" value="P:hydrogen peroxide catabolic process"/>
    <property type="evidence" value="ECO:0007669"/>
    <property type="project" value="TreeGrafter"/>
</dbReference>
<dbReference type="CDD" id="cd08925">
    <property type="entry name" value="Hb-beta-like"/>
    <property type="match status" value="1"/>
</dbReference>
<dbReference type="FunFam" id="1.10.490.10:FF:000001">
    <property type="entry name" value="Hemoglobin subunit beta"/>
    <property type="match status" value="1"/>
</dbReference>
<dbReference type="Gene3D" id="1.10.490.10">
    <property type="entry name" value="Globins"/>
    <property type="match status" value="1"/>
</dbReference>
<dbReference type="InterPro" id="IPR000971">
    <property type="entry name" value="Globin"/>
</dbReference>
<dbReference type="InterPro" id="IPR009050">
    <property type="entry name" value="Globin-like_sf"/>
</dbReference>
<dbReference type="InterPro" id="IPR012292">
    <property type="entry name" value="Globin/Proto"/>
</dbReference>
<dbReference type="InterPro" id="IPR002337">
    <property type="entry name" value="Hemoglobin_b"/>
</dbReference>
<dbReference type="InterPro" id="IPR050056">
    <property type="entry name" value="Hemoglobin_oxygen_transport"/>
</dbReference>
<dbReference type="PANTHER" id="PTHR11442">
    <property type="entry name" value="HEMOGLOBIN FAMILY MEMBER"/>
    <property type="match status" value="1"/>
</dbReference>
<dbReference type="PANTHER" id="PTHR11442:SF42">
    <property type="entry name" value="HEMOGLOBIN SUBUNIT BETA"/>
    <property type="match status" value="1"/>
</dbReference>
<dbReference type="Pfam" id="PF00042">
    <property type="entry name" value="Globin"/>
    <property type="match status" value="1"/>
</dbReference>
<dbReference type="PRINTS" id="PR00814">
    <property type="entry name" value="BETAHAEM"/>
</dbReference>
<dbReference type="SUPFAM" id="SSF46458">
    <property type="entry name" value="Globin-like"/>
    <property type="match status" value="1"/>
</dbReference>
<dbReference type="PROSITE" id="PS01033">
    <property type="entry name" value="GLOBIN"/>
    <property type="match status" value="1"/>
</dbReference>
<keyword id="KW-0007">Acetylation</keyword>
<keyword id="KW-0349">Heme</keyword>
<keyword id="KW-0408">Iron</keyword>
<keyword id="KW-0479">Metal-binding</keyword>
<keyword id="KW-0561">Oxygen transport</keyword>
<keyword id="KW-0597">Phosphoprotein</keyword>
<keyword id="KW-0702">S-nitrosylation</keyword>
<keyword id="KW-0813">Transport</keyword>
<protein>
    <recommendedName>
        <fullName>Hemoglobin subunit beta</fullName>
    </recommendedName>
    <alternativeName>
        <fullName>Beta-globin</fullName>
    </alternativeName>
    <alternativeName>
        <fullName>Hemoglobin beta chain</fullName>
    </alternativeName>
</protein>
<feature type="initiator methionine" description="Removed" evidence="1">
    <location>
        <position position="1"/>
    </location>
</feature>
<feature type="chain" id="PRO_0000052876" description="Hemoglobin subunit beta">
    <location>
        <begin position="2"/>
        <end position="147"/>
    </location>
</feature>
<feature type="domain" description="Globin" evidence="3">
    <location>
        <begin position="3"/>
        <end position="147"/>
    </location>
</feature>
<feature type="binding site" description="distal binding residue">
    <location>
        <position position="64"/>
    </location>
    <ligand>
        <name>heme b</name>
        <dbReference type="ChEBI" id="CHEBI:60344"/>
    </ligand>
    <ligandPart>
        <name>Fe</name>
        <dbReference type="ChEBI" id="CHEBI:18248"/>
    </ligandPart>
</feature>
<feature type="binding site" description="proximal binding residue">
    <location>
        <position position="93"/>
    </location>
    <ligand>
        <name>heme b</name>
        <dbReference type="ChEBI" id="CHEBI:60344"/>
    </ligand>
    <ligandPart>
        <name>Fe</name>
        <dbReference type="ChEBI" id="CHEBI:18248"/>
    </ligandPart>
</feature>
<feature type="modified residue" description="N-acetylvaline" evidence="1">
    <location>
        <position position="2"/>
    </location>
</feature>
<feature type="modified residue" description="Phosphothreonine" evidence="2">
    <location>
        <position position="13"/>
    </location>
</feature>
<feature type="modified residue" description="Phosphoserine" evidence="2">
    <location>
        <position position="45"/>
    </location>
</feature>
<feature type="modified residue" description="N6-acetyllysine" evidence="2">
    <location>
        <position position="60"/>
    </location>
</feature>
<feature type="modified residue" description="N6-acetyllysine" evidence="2">
    <location>
        <position position="83"/>
    </location>
</feature>
<feature type="modified residue" description="S-nitrosocysteine" evidence="2">
    <location>
        <position position="94"/>
    </location>
</feature>
<feature type="modified residue" description="N6-acetyllysine" evidence="2">
    <location>
        <position position="145"/>
    </location>
</feature>
<gene>
    <name type="primary">HBB</name>
</gene>
<comment type="function">
    <text>Involved in oxygen transport from the lung to the various peripheral tissues.</text>
</comment>
<comment type="subunit">
    <text>Heterotetramer of two alpha chains and two beta chains.</text>
</comment>
<comment type="tissue specificity">
    <text>Red blood cells.</text>
</comment>
<comment type="similarity">
    <text evidence="3">Belongs to the globin family.</text>
</comment>
<evidence type="ECO:0000250" key="1">
    <source>
        <dbReference type="UniProtKB" id="P02086"/>
    </source>
</evidence>
<evidence type="ECO:0000250" key="2">
    <source>
        <dbReference type="UniProtKB" id="P68871"/>
    </source>
</evidence>
<evidence type="ECO:0000255" key="3">
    <source>
        <dbReference type="PROSITE-ProRule" id="PRU00238"/>
    </source>
</evidence>
<accession>Q6WN26</accession>
<organism>
    <name type="scientific">Aotus azarae</name>
    <name type="common">Azara's night monkey</name>
    <name type="synonym">Simia azarae</name>
    <dbReference type="NCBI Taxonomy" id="30591"/>
    <lineage>
        <taxon>Eukaryota</taxon>
        <taxon>Metazoa</taxon>
        <taxon>Chordata</taxon>
        <taxon>Craniata</taxon>
        <taxon>Vertebrata</taxon>
        <taxon>Euteleostomi</taxon>
        <taxon>Mammalia</taxon>
        <taxon>Eutheria</taxon>
        <taxon>Euarchontoglires</taxon>
        <taxon>Primates</taxon>
        <taxon>Haplorrhini</taxon>
        <taxon>Platyrrhini</taxon>
        <taxon>Aotidae</taxon>
        <taxon>Aotus</taxon>
    </lineage>
</organism>
<proteinExistence type="evidence at transcript level"/>